<gene>
    <name type="primary">rnaset2</name>
    <name type="synonym">dre2</name>
    <name type="ORF">zgc:113369</name>
</gene>
<sequence length="240" mass="27456">MRFIAFAVIFSAVYLCSSAFTHPRGEWTKLILTQHWPQTFCKMEHCKTDFSYWTLHGLWPNTGVRCNTSWHFNASLIEDILPEMEKFWPDLLEPSSPKFWNYEWTKHGTCAAKSESLNSEHKYFGKALELYHKFDLNSVLLKNQIVPSEKHYTLEDVEEAITSAYGVKPKIQCVHPGQGGQVQILGQIEICVDRDFQLMGCEKSSEDTWSNDLPTVPVSGQSGLSVCDHSMPVYYPPVQA</sequence>
<protein>
    <recommendedName>
        <fullName>Ribonuclease T2</fullName>
        <ecNumber evidence="5">4.6.1.19</ecNumber>
    </recommendedName>
    <alternativeName>
        <fullName>RNase Dre2</fullName>
    </alternativeName>
</protein>
<keyword id="KW-1015">Disulfide bond</keyword>
<keyword id="KW-0255">Endonuclease</keyword>
<keyword id="KW-0256">Endoplasmic reticulum</keyword>
<keyword id="KW-0325">Glycoprotein</keyword>
<keyword id="KW-0378">Hydrolase</keyword>
<keyword id="KW-0456">Lyase</keyword>
<keyword id="KW-0458">Lysosome</keyword>
<keyword id="KW-0540">Nuclease</keyword>
<keyword id="KW-1185">Reference proteome</keyword>
<keyword id="KW-0964">Secreted</keyword>
<keyword id="KW-0732">Signal</keyword>
<organism>
    <name type="scientific">Danio rerio</name>
    <name type="common">Zebrafish</name>
    <name type="synonym">Brachydanio rerio</name>
    <dbReference type="NCBI Taxonomy" id="7955"/>
    <lineage>
        <taxon>Eukaryota</taxon>
        <taxon>Metazoa</taxon>
        <taxon>Chordata</taxon>
        <taxon>Craniata</taxon>
        <taxon>Vertebrata</taxon>
        <taxon>Euteleostomi</taxon>
        <taxon>Actinopterygii</taxon>
        <taxon>Neopterygii</taxon>
        <taxon>Teleostei</taxon>
        <taxon>Ostariophysi</taxon>
        <taxon>Cypriniformes</taxon>
        <taxon>Danionidae</taxon>
        <taxon>Danioninae</taxon>
        <taxon>Danio</taxon>
    </lineage>
</organism>
<comment type="function">
    <text evidence="8">Has ribonuclease activity, with higher activity at acidic pH. Probably is involved in lysosomal degradation of ribosomal RNA.</text>
</comment>
<comment type="catalytic activity">
    <reaction evidence="5">
        <text>a ribonucleotidyl-ribonucleotide-RNA + H2O = a 3'-end 3'-phospho-ribonucleotide-RNA + a 5'-end dephospho-ribonucleoside-RNA + H(+)</text>
        <dbReference type="Rhea" id="RHEA:68052"/>
        <dbReference type="Rhea" id="RHEA-COMP:10463"/>
        <dbReference type="Rhea" id="RHEA-COMP:13936"/>
        <dbReference type="Rhea" id="RHEA-COMP:17355"/>
        <dbReference type="ChEBI" id="CHEBI:15377"/>
        <dbReference type="ChEBI" id="CHEBI:15378"/>
        <dbReference type="ChEBI" id="CHEBI:83062"/>
        <dbReference type="ChEBI" id="CHEBI:138284"/>
        <dbReference type="ChEBI" id="CHEBI:173118"/>
        <dbReference type="EC" id="4.6.1.19"/>
    </reaction>
</comment>
<comment type="subcellular location">
    <subcellularLocation>
        <location evidence="1">Lysosome lumen</location>
    </subcellularLocation>
    <subcellularLocation>
        <location evidence="1">Endoplasmic reticulum lumen</location>
    </subcellularLocation>
    <subcellularLocation>
        <location evidence="1">Secreted</location>
    </subcellularLocation>
</comment>
<comment type="tissue specificity">
    <text evidence="7">Ubiquitous.</text>
</comment>
<comment type="disruption phenotype">
    <text evidence="8">AO127 mutants were identified based on increased acridine orange uptake. AO127 mutants display enlarged lysosomes in brain and lysosomal accumulation of undigested ribosomal RNA in brain neurons, white matter lesions adjacent to brain ventricles, and frequent focal white matter anomalies throughout the brain. Nevertheless, mutants appear basically normal, reach normal adult size and length, are fertile and do not display obvious gross motor deficiencies.</text>
</comment>
<comment type="similarity">
    <text evidence="9">Belongs to the RNase T2 family.</text>
</comment>
<accession>B8XY56</accession>
<accession>Q4V9G5</accession>
<dbReference type="EC" id="4.6.1.19" evidence="5"/>
<dbReference type="EMBL" id="FJ460212">
    <property type="protein sequence ID" value="ACK38071.1"/>
    <property type="molecule type" value="mRNA"/>
</dbReference>
<dbReference type="EMBL" id="BX255965">
    <property type="status" value="NOT_ANNOTATED_CDS"/>
    <property type="molecule type" value="Genomic_DNA"/>
</dbReference>
<dbReference type="EMBL" id="BC096907">
    <property type="protein sequence ID" value="AAH96907.1"/>
    <property type="molecule type" value="mRNA"/>
</dbReference>
<dbReference type="RefSeq" id="NP_001025235.2">
    <property type="nucleotide sequence ID" value="NM_001030064.2"/>
</dbReference>
<dbReference type="RefSeq" id="NP_001307320.1">
    <property type="nucleotide sequence ID" value="NM_001320391.1"/>
</dbReference>
<dbReference type="RefSeq" id="XP_021336347.1">
    <property type="nucleotide sequence ID" value="XM_021480672.2"/>
</dbReference>
<dbReference type="SMR" id="B8XY56"/>
<dbReference type="FunCoup" id="B8XY56">
    <property type="interactions" value="808"/>
</dbReference>
<dbReference type="STRING" id="7955.ENSDARP00000144562"/>
<dbReference type="GlyCosmos" id="B8XY56">
    <property type="glycosylation" value="2 sites, No reported glycans"/>
</dbReference>
<dbReference type="PaxDb" id="7955-ENSDARP00000107199"/>
<dbReference type="PeptideAtlas" id="B8XY56"/>
<dbReference type="Ensembl" id="ENSDART00000128675">
    <property type="protein sequence ID" value="ENSDARP00000111898"/>
    <property type="gene ID" value="ENSDARG00000036282"/>
</dbReference>
<dbReference type="Ensembl" id="ENSDART00000161443">
    <property type="protein sequence ID" value="ENSDARP00000132627"/>
    <property type="gene ID" value="ENSDARG00000036282"/>
</dbReference>
<dbReference type="Ensembl" id="ENSDART00000164789">
    <property type="protein sequence ID" value="ENSDARP00000156176"/>
    <property type="gene ID" value="ENSDARG00000036282"/>
</dbReference>
<dbReference type="Ensembl" id="ENSDART00000168608">
    <property type="protein sequence ID" value="ENSDARP00000141181"/>
    <property type="gene ID" value="ENSDARG00000036282"/>
</dbReference>
<dbReference type="Ensembl" id="ENSDART00000178997">
    <property type="protein sequence ID" value="ENSDARP00000144562"/>
    <property type="gene ID" value="ENSDARG00000036282"/>
</dbReference>
<dbReference type="GeneID" id="791890"/>
<dbReference type="KEGG" id="dre:791890"/>
<dbReference type="AGR" id="ZFIN:ZDB-GENE-030131-2513"/>
<dbReference type="CTD" id="8635"/>
<dbReference type="ZFIN" id="ZDB-GENE-030131-2513">
    <property type="gene designation" value="rnaset2"/>
</dbReference>
<dbReference type="eggNOG" id="KOG1642">
    <property type="taxonomic scope" value="Eukaryota"/>
</dbReference>
<dbReference type="HOGENOM" id="CLU_069912_1_0_1"/>
<dbReference type="InParanoid" id="B8XY56"/>
<dbReference type="OMA" id="TNCHIGS"/>
<dbReference type="OrthoDB" id="435754at2759"/>
<dbReference type="PhylomeDB" id="B8XY56"/>
<dbReference type="TreeFam" id="TF315063"/>
<dbReference type="BRENDA" id="4.6.1.19">
    <property type="organism ID" value="928"/>
</dbReference>
<dbReference type="Reactome" id="R-DRE-6798695">
    <property type="pathway name" value="Neutrophil degranulation"/>
</dbReference>
<dbReference type="PRO" id="PR:B8XY56"/>
<dbReference type="Proteomes" id="UP000000437">
    <property type="component" value="Chromosome 13"/>
</dbReference>
<dbReference type="Bgee" id="ENSDARG00000036282">
    <property type="expression patterns" value="Expressed in granulocyte and 24 other cell types or tissues"/>
</dbReference>
<dbReference type="ExpressionAtlas" id="B8XY56">
    <property type="expression patterns" value="baseline"/>
</dbReference>
<dbReference type="GO" id="GO:0005788">
    <property type="term" value="C:endoplasmic reticulum lumen"/>
    <property type="evidence" value="ECO:0007669"/>
    <property type="project" value="UniProtKB-SubCell"/>
</dbReference>
<dbReference type="GO" id="GO:0005576">
    <property type="term" value="C:extracellular region"/>
    <property type="evidence" value="ECO:0000318"/>
    <property type="project" value="GO_Central"/>
</dbReference>
<dbReference type="GO" id="GO:0043202">
    <property type="term" value="C:lysosomal lumen"/>
    <property type="evidence" value="ECO:0007669"/>
    <property type="project" value="UniProtKB-SubCell"/>
</dbReference>
<dbReference type="GO" id="GO:0033897">
    <property type="term" value="F:ribonuclease T2 activity"/>
    <property type="evidence" value="ECO:0007669"/>
    <property type="project" value="UniProtKB-EC"/>
</dbReference>
<dbReference type="GO" id="GO:0003723">
    <property type="term" value="F:RNA binding"/>
    <property type="evidence" value="ECO:0007669"/>
    <property type="project" value="InterPro"/>
</dbReference>
<dbReference type="GO" id="GO:0004521">
    <property type="term" value="F:RNA endonuclease activity"/>
    <property type="evidence" value="ECO:0000318"/>
    <property type="project" value="GO_Central"/>
</dbReference>
<dbReference type="GO" id="GO:0006401">
    <property type="term" value="P:RNA catabolic process"/>
    <property type="evidence" value="ECO:0000318"/>
    <property type="project" value="GO_Central"/>
</dbReference>
<dbReference type="GO" id="GO:0016075">
    <property type="term" value="P:rRNA catabolic process"/>
    <property type="evidence" value="ECO:0000315"/>
    <property type="project" value="ZFIN"/>
</dbReference>
<dbReference type="CDD" id="cd01061">
    <property type="entry name" value="RNase_T2_euk"/>
    <property type="match status" value="1"/>
</dbReference>
<dbReference type="FunFam" id="3.90.730.10:FF:000001">
    <property type="entry name" value="Ribonuclease T2"/>
    <property type="match status" value="1"/>
</dbReference>
<dbReference type="Gene3D" id="3.90.730.10">
    <property type="entry name" value="Ribonuclease T2-like"/>
    <property type="match status" value="1"/>
</dbReference>
<dbReference type="InterPro" id="IPR033697">
    <property type="entry name" value="Ribonuclease_T2_eukaryotic"/>
</dbReference>
<dbReference type="InterPro" id="IPR001568">
    <property type="entry name" value="RNase_T2-like"/>
</dbReference>
<dbReference type="InterPro" id="IPR036430">
    <property type="entry name" value="RNase_T2-like_sf"/>
</dbReference>
<dbReference type="InterPro" id="IPR018188">
    <property type="entry name" value="RNase_T2_His_AS_1"/>
</dbReference>
<dbReference type="InterPro" id="IPR033130">
    <property type="entry name" value="RNase_T2_His_AS_2"/>
</dbReference>
<dbReference type="PANTHER" id="PTHR11240">
    <property type="entry name" value="RIBONUCLEASE T2"/>
    <property type="match status" value="1"/>
</dbReference>
<dbReference type="PANTHER" id="PTHR11240:SF22">
    <property type="entry name" value="RIBONUCLEASE T2"/>
    <property type="match status" value="1"/>
</dbReference>
<dbReference type="Pfam" id="PF00445">
    <property type="entry name" value="Ribonuclease_T2"/>
    <property type="match status" value="1"/>
</dbReference>
<dbReference type="SUPFAM" id="SSF55895">
    <property type="entry name" value="Ribonuclease Rh-like"/>
    <property type="match status" value="1"/>
</dbReference>
<dbReference type="PROSITE" id="PS00530">
    <property type="entry name" value="RNASE_T2_1"/>
    <property type="match status" value="1"/>
</dbReference>
<dbReference type="PROSITE" id="PS00531">
    <property type="entry name" value="RNASE_T2_2"/>
    <property type="match status" value="1"/>
</dbReference>
<feature type="signal peptide" evidence="4">
    <location>
        <begin position="1"/>
        <end position="19"/>
    </location>
</feature>
<feature type="chain" id="PRO_0000420169" description="Ribonuclease T2">
    <location>
        <begin position="20"/>
        <end position="240"/>
    </location>
</feature>
<feature type="active site" evidence="5">
    <location>
        <position position="56"/>
    </location>
</feature>
<feature type="active site" evidence="3">
    <location>
        <position position="103"/>
    </location>
</feature>
<feature type="active site" evidence="6">
    <location>
        <position position="107"/>
    </location>
</feature>
<feature type="glycosylation site" description="N-linked (GlcNAc...) asparagine" evidence="4">
    <location>
        <position position="67"/>
    </location>
</feature>
<feature type="glycosylation site" description="N-linked (GlcNAc...) asparagine" evidence="4">
    <location>
        <position position="73"/>
    </location>
</feature>
<feature type="disulfide bond" evidence="2">
    <location>
        <begin position="41"/>
        <end position="46"/>
    </location>
</feature>
<feature type="disulfide bond" evidence="2">
    <location>
        <begin position="66"/>
        <end position="110"/>
    </location>
</feature>
<feature type="disulfide bond" evidence="2">
    <location>
        <begin position="173"/>
        <end position="227"/>
    </location>
</feature>
<feature type="disulfide bond" evidence="2">
    <location>
        <begin position="191"/>
        <end position="201"/>
    </location>
</feature>
<feature type="sequence conflict" description="In Ref. 3; AAH96907." evidence="9" ref="3">
    <original>H</original>
    <variation>Q</variation>
    <location>
        <position position="45"/>
    </location>
</feature>
<feature type="sequence conflict" description="In Ref. 3; AAH96907." evidence="9" ref="3">
    <original>T</original>
    <variation>S</variation>
    <location>
        <position position="153"/>
    </location>
</feature>
<reference key="1">
    <citation type="journal article" date="2009" name="BMC Evol. Biol.">
        <title>Zebrafish RNase T2 genes and the evolution of secretory ribonucleases in animals.</title>
        <authorList>
            <person name="Hillwig M.S."/>
            <person name="Rizhsky L."/>
            <person name="Wang Y."/>
            <person name="Umanskaya A."/>
            <person name="Essner J.J."/>
            <person name="MacIntosh G.C."/>
        </authorList>
    </citation>
    <scope>NUCLEOTIDE SEQUENCE [MRNA]</scope>
    <scope>TISSUE SPECIFICITY</scope>
</reference>
<reference key="2">
    <citation type="journal article" date="2013" name="Nature">
        <title>The zebrafish reference genome sequence and its relationship to the human genome.</title>
        <authorList>
            <person name="Howe K."/>
            <person name="Clark M.D."/>
            <person name="Torroja C.F."/>
            <person name="Torrance J."/>
            <person name="Berthelot C."/>
            <person name="Muffato M."/>
            <person name="Collins J.E."/>
            <person name="Humphray S."/>
            <person name="McLaren K."/>
            <person name="Matthews L."/>
            <person name="McLaren S."/>
            <person name="Sealy I."/>
            <person name="Caccamo M."/>
            <person name="Churcher C."/>
            <person name="Scott C."/>
            <person name="Barrett J.C."/>
            <person name="Koch R."/>
            <person name="Rauch G.J."/>
            <person name="White S."/>
            <person name="Chow W."/>
            <person name="Kilian B."/>
            <person name="Quintais L.T."/>
            <person name="Guerra-Assuncao J.A."/>
            <person name="Zhou Y."/>
            <person name="Gu Y."/>
            <person name="Yen J."/>
            <person name="Vogel J.H."/>
            <person name="Eyre T."/>
            <person name="Redmond S."/>
            <person name="Banerjee R."/>
            <person name="Chi J."/>
            <person name="Fu B."/>
            <person name="Langley E."/>
            <person name="Maguire S.F."/>
            <person name="Laird G.K."/>
            <person name="Lloyd D."/>
            <person name="Kenyon E."/>
            <person name="Donaldson S."/>
            <person name="Sehra H."/>
            <person name="Almeida-King J."/>
            <person name="Loveland J."/>
            <person name="Trevanion S."/>
            <person name="Jones M."/>
            <person name="Quail M."/>
            <person name="Willey D."/>
            <person name="Hunt A."/>
            <person name="Burton J."/>
            <person name="Sims S."/>
            <person name="McLay K."/>
            <person name="Plumb B."/>
            <person name="Davis J."/>
            <person name="Clee C."/>
            <person name="Oliver K."/>
            <person name="Clark R."/>
            <person name="Riddle C."/>
            <person name="Elliot D."/>
            <person name="Threadgold G."/>
            <person name="Harden G."/>
            <person name="Ware D."/>
            <person name="Begum S."/>
            <person name="Mortimore B."/>
            <person name="Kerry G."/>
            <person name="Heath P."/>
            <person name="Phillimore B."/>
            <person name="Tracey A."/>
            <person name="Corby N."/>
            <person name="Dunn M."/>
            <person name="Johnson C."/>
            <person name="Wood J."/>
            <person name="Clark S."/>
            <person name="Pelan S."/>
            <person name="Griffiths G."/>
            <person name="Smith M."/>
            <person name="Glithero R."/>
            <person name="Howden P."/>
            <person name="Barker N."/>
            <person name="Lloyd C."/>
            <person name="Stevens C."/>
            <person name="Harley J."/>
            <person name="Holt K."/>
            <person name="Panagiotidis G."/>
            <person name="Lovell J."/>
            <person name="Beasley H."/>
            <person name="Henderson C."/>
            <person name="Gordon D."/>
            <person name="Auger K."/>
            <person name="Wright D."/>
            <person name="Collins J."/>
            <person name="Raisen C."/>
            <person name="Dyer L."/>
            <person name="Leung K."/>
            <person name="Robertson L."/>
            <person name="Ambridge K."/>
            <person name="Leongamornlert D."/>
            <person name="McGuire S."/>
            <person name="Gilderthorp R."/>
            <person name="Griffiths C."/>
            <person name="Manthravadi D."/>
            <person name="Nichol S."/>
            <person name="Barker G."/>
            <person name="Whitehead S."/>
            <person name="Kay M."/>
            <person name="Brown J."/>
            <person name="Murnane C."/>
            <person name="Gray E."/>
            <person name="Humphries M."/>
            <person name="Sycamore N."/>
            <person name="Barker D."/>
            <person name="Saunders D."/>
            <person name="Wallis J."/>
            <person name="Babbage A."/>
            <person name="Hammond S."/>
            <person name="Mashreghi-Mohammadi M."/>
            <person name="Barr L."/>
            <person name="Martin S."/>
            <person name="Wray P."/>
            <person name="Ellington A."/>
            <person name="Matthews N."/>
            <person name="Ellwood M."/>
            <person name="Woodmansey R."/>
            <person name="Clark G."/>
            <person name="Cooper J."/>
            <person name="Tromans A."/>
            <person name="Grafham D."/>
            <person name="Skuce C."/>
            <person name="Pandian R."/>
            <person name="Andrews R."/>
            <person name="Harrison E."/>
            <person name="Kimberley A."/>
            <person name="Garnett J."/>
            <person name="Fosker N."/>
            <person name="Hall R."/>
            <person name="Garner P."/>
            <person name="Kelly D."/>
            <person name="Bird C."/>
            <person name="Palmer S."/>
            <person name="Gehring I."/>
            <person name="Berger A."/>
            <person name="Dooley C.M."/>
            <person name="Ersan-Urun Z."/>
            <person name="Eser C."/>
            <person name="Geiger H."/>
            <person name="Geisler M."/>
            <person name="Karotki L."/>
            <person name="Kirn A."/>
            <person name="Konantz J."/>
            <person name="Konantz M."/>
            <person name="Oberlander M."/>
            <person name="Rudolph-Geiger S."/>
            <person name="Teucke M."/>
            <person name="Lanz C."/>
            <person name="Raddatz G."/>
            <person name="Osoegawa K."/>
            <person name="Zhu B."/>
            <person name="Rapp A."/>
            <person name="Widaa S."/>
            <person name="Langford C."/>
            <person name="Yang F."/>
            <person name="Schuster S.C."/>
            <person name="Carter N.P."/>
            <person name="Harrow J."/>
            <person name="Ning Z."/>
            <person name="Herrero J."/>
            <person name="Searle S.M."/>
            <person name="Enright A."/>
            <person name="Geisler R."/>
            <person name="Plasterk R.H."/>
            <person name="Lee C."/>
            <person name="Westerfield M."/>
            <person name="de Jong P.J."/>
            <person name="Zon L.I."/>
            <person name="Postlethwait J.H."/>
            <person name="Nusslein-Volhard C."/>
            <person name="Hubbard T.J."/>
            <person name="Roest Crollius H."/>
            <person name="Rogers J."/>
            <person name="Stemple D.L."/>
        </authorList>
    </citation>
    <scope>NUCLEOTIDE SEQUENCE [LARGE SCALE GENOMIC DNA]</scope>
    <source>
        <strain>Tuebingen</strain>
    </source>
</reference>
<reference key="3">
    <citation type="submission" date="2005-06" db="EMBL/GenBank/DDBJ databases">
        <authorList>
            <consortium name="NIH - Zebrafish Gene Collection (ZGC) project"/>
        </authorList>
    </citation>
    <scope>NUCLEOTIDE SEQUENCE [LARGE SCALE MRNA]</scope>
    <source>
        <tissue>Embryo</tissue>
    </source>
</reference>
<reference key="4">
    <citation type="journal article" date="2011" name="Proc. Natl. Acad. Sci. U.S.A.">
        <title>rnaset2 mutant zebrafish model familial cystic leukoencephalopathy and reveal a role for RNase T2 in degrading ribosomal RNA.</title>
        <authorList>
            <person name="Haud N."/>
            <person name="Kara F."/>
            <person name="Diekmann S."/>
            <person name="Henneke M."/>
            <person name="Willer J.R."/>
            <person name="Hillwig M.S."/>
            <person name="Gregg R.G."/>
            <person name="Macintosh G.C."/>
            <person name="Gartner J."/>
            <person name="Alia A."/>
            <person name="Hurlstone A.F."/>
        </authorList>
    </citation>
    <scope>FUNCTION</scope>
    <scope>DISRUPTION PHENOTYPE</scope>
</reference>
<proteinExistence type="evidence at transcript level"/>
<name>RNT2_DANRE</name>
<evidence type="ECO:0000250" key="1"/>
<evidence type="ECO:0000250" key="2">
    <source>
        <dbReference type="UniProtKB" id="O00584"/>
    </source>
</evidence>
<evidence type="ECO:0000250" key="3">
    <source>
        <dbReference type="UniProtKB" id="P08056"/>
    </source>
</evidence>
<evidence type="ECO:0000255" key="4"/>
<evidence type="ECO:0000255" key="5">
    <source>
        <dbReference type="PROSITE-ProRule" id="PRU10045"/>
    </source>
</evidence>
<evidence type="ECO:0000255" key="6">
    <source>
        <dbReference type="PROSITE-ProRule" id="PRU10046"/>
    </source>
</evidence>
<evidence type="ECO:0000269" key="7">
    <source>
    </source>
</evidence>
<evidence type="ECO:0000269" key="8">
    <source>
    </source>
</evidence>
<evidence type="ECO:0000305" key="9"/>